<organism>
    <name type="scientific">Ureaplasma parvum serovar 3 (strain ATCC 27815 / 27 / NCTC 11736)</name>
    <dbReference type="NCBI Taxonomy" id="505682"/>
    <lineage>
        <taxon>Bacteria</taxon>
        <taxon>Bacillati</taxon>
        <taxon>Mycoplasmatota</taxon>
        <taxon>Mycoplasmoidales</taxon>
        <taxon>Mycoplasmoidaceae</taxon>
        <taxon>Ureaplasma</taxon>
    </lineage>
</organism>
<proteinExistence type="inferred from homology"/>
<comment type="function">
    <text evidence="1">One of the primary rRNA binding proteins, it binds directly to 16S rRNA where it helps nucleate assembly of the platform of the 30S subunit by binding and bridging several RNA helices of the 16S rRNA.</text>
</comment>
<comment type="function">
    <text evidence="1">Forms an intersubunit bridge (bridge B4) with the 23S rRNA of the 50S subunit in the ribosome.</text>
</comment>
<comment type="subunit">
    <text evidence="1">Part of the 30S ribosomal subunit. Forms a bridge to the 50S subunit in the 70S ribosome, contacting the 23S rRNA.</text>
</comment>
<comment type="similarity">
    <text evidence="1">Belongs to the universal ribosomal protein uS15 family.</text>
</comment>
<keyword id="KW-0687">Ribonucleoprotein</keyword>
<keyword id="KW-0689">Ribosomal protein</keyword>
<keyword id="KW-0694">RNA-binding</keyword>
<keyword id="KW-0699">rRNA-binding</keyword>
<accession>B1AIJ1</accession>
<protein>
    <recommendedName>
        <fullName evidence="1">Small ribosomal subunit protein uS15</fullName>
    </recommendedName>
    <alternativeName>
        <fullName evidence="2">30S ribosomal protein S15</fullName>
    </alternativeName>
</protein>
<sequence>MAVSKQQKHDLTVKFGGSASNTGKTEVQVAILSAEIDSLTTHMIENKKDKASKRGLYKKVAQRKKLLSYLQRVDIERYRALIKELNLRG</sequence>
<evidence type="ECO:0000255" key="1">
    <source>
        <dbReference type="HAMAP-Rule" id="MF_01343"/>
    </source>
</evidence>
<evidence type="ECO:0000305" key="2"/>
<feature type="chain" id="PRO_1000086827" description="Small ribosomal subunit protein uS15">
    <location>
        <begin position="1"/>
        <end position="89"/>
    </location>
</feature>
<dbReference type="EMBL" id="CP000942">
    <property type="protein sequence ID" value="ACA32703.1"/>
    <property type="molecule type" value="Genomic_DNA"/>
</dbReference>
<dbReference type="RefSeq" id="WP_004025791.1">
    <property type="nucleotide sequence ID" value="NC_010503.1"/>
</dbReference>
<dbReference type="SMR" id="B1AIJ1"/>
<dbReference type="GeneID" id="93848676"/>
<dbReference type="KEGG" id="upa:UPA3_0210"/>
<dbReference type="HOGENOM" id="CLU_148518_1_0_14"/>
<dbReference type="Proteomes" id="UP000002162">
    <property type="component" value="Chromosome"/>
</dbReference>
<dbReference type="GO" id="GO:0022627">
    <property type="term" value="C:cytosolic small ribosomal subunit"/>
    <property type="evidence" value="ECO:0007669"/>
    <property type="project" value="TreeGrafter"/>
</dbReference>
<dbReference type="GO" id="GO:0019843">
    <property type="term" value="F:rRNA binding"/>
    <property type="evidence" value="ECO:0007669"/>
    <property type="project" value="UniProtKB-UniRule"/>
</dbReference>
<dbReference type="GO" id="GO:0003735">
    <property type="term" value="F:structural constituent of ribosome"/>
    <property type="evidence" value="ECO:0007669"/>
    <property type="project" value="InterPro"/>
</dbReference>
<dbReference type="GO" id="GO:0006412">
    <property type="term" value="P:translation"/>
    <property type="evidence" value="ECO:0007669"/>
    <property type="project" value="UniProtKB-UniRule"/>
</dbReference>
<dbReference type="CDD" id="cd00353">
    <property type="entry name" value="Ribosomal_S15p_S13e"/>
    <property type="match status" value="1"/>
</dbReference>
<dbReference type="Gene3D" id="6.10.250.3130">
    <property type="match status" value="1"/>
</dbReference>
<dbReference type="Gene3D" id="1.10.287.10">
    <property type="entry name" value="S15/NS1, RNA-binding"/>
    <property type="match status" value="1"/>
</dbReference>
<dbReference type="HAMAP" id="MF_01343_B">
    <property type="entry name" value="Ribosomal_uS15_B"/>
    <property type="match status" value="1"/>
</dbReference>
<dbReference type="InterPro" id="IPR000589">
    <property type="entry name" value="Ribosomal_uS15"/>
</dbReference>
<dbReference type="InterPro" id="IPR005290">
    <property type="entry name" value="Ribosomal_uS15_bac-type"/>
</dbReference>
<dbReference type="InterPro" id="IPR009068">
    <property type="entry name" value="uS15_NS1_RNA-bd_sf"/>
</dbReference>
<dbReference type="NCBIfam" id="TIGR00952">
    <property type="entry name" value="S15_bact"/>
    <property type="match status" value="1"/>
</dbReference>
<dbReference type="PANTHER" id="PTHR23321">
    <property type="entry name" value="RIBOSOMAL PROTEIN S15, BACTERIAL AND ORGANELLAR"/>
    <property type="match status" value="1"/>
</dbReference>
<dbReference type="PANTHER" id="PTHR23321:SF26">
    <property type="entry name" value="SMALL RIBOSOMAL SUBUNIT PROTEIN US15M"/>
    <property type="match status" value="1"/>
</dbReference>
<dbReference type="Pfam" id="PF00312">
    <property type="entry name" value="Ribosomal_S15"/>
    <property type="match status" value="1"/>
</dbReference>
<dbReference type="SMART" id="SM01387">
    <property type="entry name" value="Ribosomal_S15"/>
    <property type="match status" value="1"/>
</dbReference>
<dbReference type="SUPFAM" id="SSF47060">
    <property type="entry name" value="S15/NS1 RNA-binding domain"/>
    <property type="match status" value="1"/>
</dbReference>
<dbReference type="PROSITE" id="PS00362">
    <property type="entry name" value="RIBOSOMAL_S15"/>
    <property type="match status" value="1"/>
</dbReference>
<name>RS15_UREP2</name>
<reference key="1">
    <citation type="submission" date="2008-02" db="EMBL/GenBank/DDBJ databases">
        <title>Genome sequence of Ureaplasma parvum serovar 3.</title>
        <authorList>
            <person name="Methe B.A."/>
            <person name="Glass J."/>
            <person name="Waites K."/>
            <person name="Shrivastava S."/>
        </authorList>
    </citation>
    <scope>NUCLEOTIDE SEQUENCE [LARGE SCALE GENOMIC DNA]</scope>
    <source>
        <strain>ATCC 27815 / 27 / NCTC 11736</strain>
    </source>
</reference>
<gene>
    <name evidence="1" type="primary">rpsO</name>
    <name type="ordered locus">UPA3_0210</name>
</gene>